<gene>
    <name evidence="1" type="primary">gltX</name>
    <name type="ordered locus">DIP1115</name>
</gene>
<dbReference type="EC" id="6.1.1.17" evidence="1"/>
<dbReference type="EMBL" id="BX248357">
    <property type="protein sequence ID" value="CAE49635.1"/>
    <property type="molecule type" value="Genomic_DNA"/>
</dbReference>
<dbReference type="RefSeq" id="WP_010934815.1">
    <property type="nucleotide sequence ID" value="NC_002935.2"/>
</dbReference>
<dbReference type="SMR" id="Q6NHM1"/>
<dbReference type="STRING" id="257309.DIP1115"/>
<dbReference type="KEGG" id="cdi:DIP1115"/>
<dbReference type="HOGENOM" id="CLU_015768_6_1_11"/>
<dbReference type="Proteomes" id="UP000002198">
    <property type="component" value="Chromosome"/>
</dbReference>
<dbReference type="GO" id="GO:0005829">
    <property type="term" value="C:cytosol"/>
    <property type="evidence" value="ECO:0007669"/>
    <property type="project" value="TreeGrafter"/>
</dbReference>
<dbReference type="GO" id="GO:0005524">
    <property type="term" value="F:ATP binding"/>
    <property type="evidence" value="ECO:0007669"/>
    <property type="project" value="UniProtKB-UniRule"/>
</dbReference>
<dbReference type="GO" id="GO:0004818">
    <property type="term" value="F:glutamate-tRNA ligase activity"/>
    <property type="evidence" value="ECO:0007669"/>
    <property type="project" value="UniProtKB-UniRule"/>
</dbReference>
<dbReference type="GO" id="GO:0000049">
    <property type="term" value="F:tRNA binding"/>
    <property type="evidence" value="ECO:0007669"/>
    <property type="project" value="InterPro"/>
</dbReference>
<dbReference type="GO" id="GO:0008270">
    <property type="term" value="F:zinc ion binding"/>
    <property type="evidence" value="ECO:0007669"/>
    <property type="project" value="InterPro"/>
</dbReference>
<dbReference type="GO" id="GO:0006424">
    <property type="term" value="P:glutamyl-tRNA aminoacylation"/>
    <property type="evidence" value="ECO:0007669"/>
    <property type="project" value="UniProtKB-UniRule"/>
</dbReference>
<dbReference type="CDD" id="cd00808">
    <property type="entry name" value="GluRS_core"/>
    <property type="match status" value="1"/>
</dbReference>
<dbReference type="FunFam" id="3.40.50.620:FF:000149">
    <property type="entry name" value="Glutamate--tRNA ligase"/>
    <property type="match status" value="1"/>
</dbReference>
<dbReference type="Gene3D" id="1.10.10.350">
    <property type="match status" value="1"/>
</dbReference>
<dbReference type="Gene3D" id="1.10.8.70">
    <property type="entry name" value="Glutamate-tRNA synthetase, class I, anticodon-binding domain 1"/>
    <property type="match status" value="1"/>
</dbReference>
<dbReference type="Gene3D" id="3.40.50.620">
    <property type="entry name" value="HUPs"/>
    <property type="match status" value="1"/>
</dbReference>
<dbReference type="HAMAP" id="MF_00022">
    <property type="entry name" value="Glu_tRNA_synth_type1"/>
    <property type="match status" value="1"/>
</dbReference>
<dbReference type="InterPro" id="IPR045462">
    <property type="entry name" value="aa-tRNA-synth_I_cd-bd"/>
</dbReference>
<dbReference type="InterPro" id="IPR020751">
    <property type="entry name" value="aa-tRNA-synth_I_codon-bd_sub2"/>
</dbReference>
<dbReference type="InterPro" id="IPR008925">
    <property type="entry name" value="aa_tRNA-synth_I_cd-bd_sf"/>
</dbReference>
<dbReference type="InterPro" id="IPR004527">
    <property type="entry name" value="Glu-tRNA-ligase_bac/mito"/>
</dbReference>
<dbReference type="InterPro" id="IPR020752">
    <property type="entry name" value="Glu-tRNA-synth_I_codon-bd_sub1"/>
</dbReference>
<dbReference type="InterPro" id="IPR000924">
    <property type="entry name" value="Glu/Gln-tRNA-synth"/>
</dbReference>
<dbReference type="InterPro" id="IPR020058">
    <property type="entry name" value="Glu/Gln-tRNA-synth_Ib_cat-dom"/>
</dbReference>
<dbReference type="InterPro" id="IPR049940">
    <property type="entry name" value="GluQ/Sye"/>
</dbReference>
<dbReference type="InterPro" id="IPR033910">
    <property type="entry name" value="GluRS_core"/>
</dbReference>
<dbReference type="InterPro" id="IPR014729">
    <property type="entry name" value="Rossmann-like_a/b/a_fold"/>
</dbReference>
<dbReference type="NCBIfam" id="TIGR00464">
    <property type="entry name" value="gltX_bact"/>
    <property type="match status" value="1"/>
</dbReference>
<dbReference type="PANTHER" id="PTHR43311">
    <property type="entry name" value="GLUTAMATE--TRNA LIGASE"/>
    <property type="match status" value="1"/>
</dbReference>
<dbReference type="PANTHER" id="PTHR43311:SF2">
    <property type="entry name" value="GLUTAMATE--TRNA LIGASE, MITOCHONDRIAL-RELATED"/>
    <property type="match status" value="1"/>
</dbReference>
<dbReference type="Pfam" id="PF19269">
    <property type="entry name" value="Anticodon_2"/>
    <property type="match status" value="1"/>
</dbReference>
<dbReference type="Pfam" id="PF00749">
    <property type="entry name" value="tRNA-synt_1c"/>
    <property type="match status" value="1"/>
</dbReference>
<dbReference type="PRINTS" id="PR00987">
    <property type="entry name" value="TRNASYNTHGLU"/>
</dbReference>
<dbReference type="SUPFAM" id="SSF48163">
    <property type="entry name" value="An anticodon-binding domain of class I aminoacyl-tRNA synthetases"/>
    <property type="match status" value="1"/>
</dbReference>
<dbReference type="SUPFAM" id="SSF52374">
    <property type="entry name" value="Nucleotidylyl transferase"/>
    <property type="match status" value="1"/>
</dbReference>
<protein>
    <recommendedName>
        <fullName evidence="1">Glutamate--tRNA ligase</fullName>
        <ecNumber evidence="1">6.1.1.17</ecNumber>
    </recommendedName>
    <alternativeName>
        <fullName evidence="1">Glutamyl-tRNA synthetase</fullName>
        <shortName evidence="1">GluRS</shortName>
    </alternativeName>
</protein>
<name>SYE_CORDI</name>
<accession>Q6NHM1</accession>
<reference key="1">
    <citation type="journal article" date="2003" name="Nucleic Acids Res.">
        <title>The complete genome sequence and analysis of Corynebacterium diphtheriae NCTC13129.</title>
        <authorList>
            <person name="Cerdeno-Tarraga A.-M."/>
            <person name="Efstratiou A."/>
            <person name="Dover L.G."/>
            <person name="Holden M.T.G."/>
            <person name="Pallen M.J."/>
            <person name="Bentley S.D."/>
            <person name="Besra G.S."/>
            <person name="Churcher C.M."/>
            <person name="James K.D."/>
            <person name="De Zoysa A."/>
            <person name="Chillingworth T."/>
            <person name="Cronin A."/>
            <person name="Dowd L."/>
            <person name="Feltwell T."/>
            <person name="Hamlin N."/>
            <person name="Holroyd S."/>
            <person name="Jagels K."/>
            <person name="Moule S."/>
            <person name="Quail M.A."/>
            <person name="Rabbinowitsch E."/>
            <person name="Rutherford K.M."/>
            <person name="Thomson N.R."/>
            <person name="Unwin L."/>
            <person name="Whitehead S."/>
            <person name="Barrell B.G."/>
            <person name="Parkhill J."/>
        </authorList>
    </citation>
    <scope>NUCLEOTIDE SEQUENCE [LARGE SCALE GENOMIC DNA]</scope>
    <source>
        <strain>ATCC 700971 / NCTC 13129 / Biotype gravis</strain>
    </source>
</reference>
<organism>
    <name type="scientific">Corynebacterium diphtheriae (strain ATCC 700971 / NCTC 13129 / Biotype gravis)</name>
    <dbReference type="NCBI Taxonomy" id="257309"/>
    <lineage>
        <taxon>Bacteria</taxon>
        <taxon>Bacillati</taxon>
        <taxon>Actinomycetota</taxon>
        <taxon>Actinomycetes</taxon>
        <taxon>Mycobacteriales</taxon>
        <taxon>Corynebacteriaceae</taxon>
        <taxon>Corynebacterium</taxon>
    </lineage>
</organism>
<proteinExistence type="inferred from homology"/>
<comment type="function">
    <text evidence="1">Catalyzes the attachment of glutamate to tRNA(Glu) in a two-step reaction: glutamate is first activated by ATP to form Glu-AMP and then transferred to the acceptor end of tRNA(Glu).</text>
</comment>
<comment type="catalytic activity">
    <reaction evidence="1">
        <text>tRNA(Glu) + L-glutamate + ATP = L-glutamyl-tRNA(Glu) + AMP + diphosphate</text>
        <dbReference type="Rhea" id="RHEA:23540"/>
        <dbReference type="Rhea" id="RHEA-COMP:9663"/>
        <dbReference type="Rhea" id="RHEA-COMP:9680"/>
        <dbReference type="ChEBI" id="CHEBI:29985"/>
        <dbReference type="ChEBI" id="CHEBI:30616"/>
        <dbReference type="ChEBI" id="CHEBI:33019"/>
        <dbReference type="ChEBI" id="CHEBI:78442"/>
        <dbReference type="ChEBI" id="CHEBI:78520"/>
        <dbReference type="ChEBI" id="CHEBI:456215"/>
        <dbReference type="EC" id="6.1.1.17"/>
    </reaction>
</comment>
<comment type="subunit">
    <text evidence="1">Monomer.</text>
</comment>
<comment type="subcellular location">
    <subcellularLocation>
        <location evidence="1">Cytoplasm</location>
    </subcellularLocation>
</comment>
<comment type="similarity">
    <text evidence="1">Belongs to the class-I aminoacyl-tRNA synthetase family. Glutamate--tRNA ligase type 1 subfamily.</text>
</comment>
<feature type="chain" id="PRO_0000119547" description="Glutamate--tRNA ligase">
    <location>
        <begin position="1"/>
        <end position="497"/>
    </location>
</feature>
<feature type="short sequence motif" description="'HIGH' region" evidence="1">
    <location>
        <begin position="13"/>
        <end position="23"/>
    </location>
</feature>
<feature type="short sequence motif" description="'KMSKS' region" evidence="1">
    <location>
        <begin position="257"/>
        <end position="261"/>
    </location>
</feature>
<feature type="binding site" evidence="1">
    <location>
        <position position="260"/>
    </location>
    <ligand>
        <name>ATP</name>
        <dbReference type="ChEBI" id="CHEBI:30616"/>
    </ligand>
</feature>
<evidence type="ECO:0000255" key="1">
    <source>
        <dbReference type="HAMAP-Rule" id="MF_00022"/>
    </source>
</evidence>
<keyword id="KW-0030">Aminoacyl-tRNA synthetase</keyword>
<keyword id="KW-0067">ATP-binding</keyword>
<keyword id="KW-0963">Cytoplasm</keyword>
<keyword id="KW-0436">Ligase</keyword>
<keyword id="KW-0547">Nucleotide-binding</keyword>
<keyword id="KW-0648">Protein biosynthesis</keyword>
<keyword id="KW-1185">Reference proteome</keyword>
<sequence length="497" mass="55744">MNIMSDVRVRFCPSPTGTPHVGMVRTALFNWAHARHTGGKLIFRIEDTDAARDSEESYQAIIDSLKWLGMDWDEGVIVGGPHEPYRQSQRMDIYKDVLEKLKEAGFVYPAYSTAQEVEERHKAAGRDPKLGYDNYDRTLTDEQIAAFEAEGRQPVWRLRMPERDWKWNDLVRGEIEFKSSTQPDYVVARSNGAPLYTLVNPVDDALMGITHVLRGEDLLPSTPRQLALYEALKVIGVAQQTPEFGHLPFVMGEGNKKLSKRDPQSNLFNHRDAGIIPEGMLNYLALLGWSLAGEKDIFSVDELVENFDVTNVLANPARFDQKKLEAINADHIRLLEPKDFEQRLRAYLTEYTDFPTDYPAEKFAIAAELVQTRIKMLGDAYGLLSFLAIADEDLTLDEKSAKKNLKETAIPALDAGIAALEGVEEWTTPAIEAALHKALIEDLDLKPRVAFGALRVGISGQAVSPPLFESMELLGKESTLTRLRATREVTPYQVAAE</sequence>